<feature type="chain" id="PRO_0000081418" description="Ethylene receptor">
    <location>
        <begin position="1"/>
        <end position="741"/>
    </location>
</feature>
<feature type="transmembrane region" description="Helical" evidence="2">
    <location>
        <begin position="23"/>
        <end position="43"/>
    </location>
</feature>
<feature type="transmembrane region" description="Helical" evidence="2">
    <location>
        <begin position="53"/>
        <end position="73"/>
    </location>
</feature>
<feature type="transmembrane region" description="Helical" evidence="2">
    <location>
        <begin position="92"/>
        <end position="112"/>
    </location>
</feature>
<feature type="domain" description="GAF">
    <location>
        <begin position="158"/>
        <end position="307"/>
    </location>
</feature>
<feature type="domain" description="Histidine kinase" evidence="3">
    <location>
        <begin position="350"/>
        <end position="589"/>
    </location>
</feature>
<feature type="domain" description="Response regulatory" evidence="4">
    <location>
        <begin position="615"/>
        <end position="732"/>
    </location>
</feature>
<feature type="binding site" evidence="1">
    <location>
        <position position="65"/>
    </location>
    <ligand>
        <name>Cu cation</name>
        <dbReference type="ChEBI" id="CHEBI:23378"/>
    </ligand>
</feature>
<feature type="binding site" evidence="1">
    <location>
        <position position="69"/>
    </location>
    <ligand>
        <name>Cu cation</name>
        <dbReference type="ChEBI" id="CHEBI:23378"/>
    </ligand>
</feature>
<feature type="modified residue" description="Phosphohistidine; by autocatalysis" evidence="3">
    <location>
        <position position="353"/>
    </location>
</feature>
<feature type="modified residue" description="4-aspartylphosphate" evidence="4">
    <location>
        <position position="663"/>
    </location>
</feature>
<feature type="disulfide bond" description="Interchain" evidence="1">
    <location>
        <position position="4"/>
    </location>
</feature>
<feature type="disulfide bond" description="Interchain" evidence="1">
    <location>
        <position position="6"/>
    </location>
</feature>
<reference key="1">
    <citation type="online journal article" date="1998" name="Plant Gene Register">
        <title>An apple (Malus domestica L. Borkh cv Granny Smith) homolog of the ethylene receptor gene ETR1.</title>
        <authorList>
            <person name="Lee S.A."/>
            <person name="Ross G.S."/>
            <person name="Gardner R.C."/>
        </authorList>
        <locator>PGR98-125</locator>
    </citation>
    <scope>NUCLEOTIDE SEQUENCE [MRNA]</scope>
    <source>
        <strain>cv. Granny Smith</strain>
        <tissue>Fruit</tissue>
    </source>
</reference>
<gene>
    <name type="primary">ETR1</name>
</gene>
<accession>O81122</accession>
<evidence type="ECO:0000250" key="1"/>
<evidence type="ECO:0000255" key="2"/>
<evidence type="ECO:0000255" key="3">
    <source>
        <dbReference type="PROSITE-ProRule" id="PRU00107"/>
    </source>
</evidence>
<evidence type="ECO:0000255" key="4">
    <source>
        <dbReference type="PROSITE-ProRule" id="PRU00169"/>
    </source>
</evidence>
<evidence type="ECO:0000305" key="5"/>
<organism>
    <name type="scientific">Malus domestica</name>
    <name type="common">Apple</name>
    <name type="synonym">Pyrus malus</name>
    <dbReference type="NCBI Taxonomy" id="3750"/>
    <lineage>
        <taxon>Eukaryota</taxon>
        <taxon>Viridiplantae</taxon>
        <taxon>Streptophyta</taxon>
        <taxon>Embryophyta</taxon>
        <taxon>Tracheophyta</taxon>
        <taxon>Spermatophyta</taxon>
        <taxon>Magnoliopsida</taxon>
        <taxon>eudicotyledons</taxon>
        <taxon>Gunneridae</taxon>
        <taxon>Pentapetalae</taxon>
        <taxon>rosids</taxon>
        <taxon>fabids</taxon>
        <taxon>Rosales</taxon>
        <taxon>Rosaceae</taxon>
        <taxon>Amygdaloideae</taxon>
        <taxon>Maleae</taxon>
        <taxon>Malus</taxon>
    </lineage>
</organism>
<keyword id="KW-0067">ATP-binding</keyword>
<keyword id="KW-0186">Copper</keyword>
<keyword id="KW-1015">Disulfide bond</keyword>
<keyword id="KW-0256">Endoplasmic reticulum</keyword>
<keyword id="KW-0936">Ethylene signaling pathway</keyword>
<keyword id="KW-0418">Kinase</keyword>
<keyword id="KW-0472">Membrane</keyword>
<keyword id="KW-0479">Metal-binding</keyword>
<keyword id="KW-0547">Nucleotide-binding</keyword>
<keyword id="KW-0597">Phosphoprotein</keyword>
<keyword id="KW-0675">Receptor</keyword>
<keyword id="KW-0808">Transferase</keyword>
<keyword id="KW-0812">Transmembrane</keyword>
<keyword id="KW-1133">Transmembrane helix</keyword>
<keyword id="KW-0902">Two-component regulatory system</keyword>
<dbReference type="EC" id="2.7.13.3"/>
<dbReference type="EMBL" id="AF032448">
    <property type="protein sequence ID" value="AAC31123.1"/>
    <property type="molecule type" value="mRNA"/>
</dbReference>
<dbReference type="PIR" id="T16992">
    <property type="entry name" value="T16992"/>
</dbReference>
<dbReference type="RefSeq" id="NP_001280831.1">
    <property type="nucleotide sequence ID" value="NM_001293902.1"/>
</dbReference>
<dbReference type="SMR" id="O81122"/>
<dbReference type="GeneID" id="103401284"/>
<dbReference type="KEGG" id="mdm:103401284"/>
<dbReference type="OrthoDB" id="60033at2759"/>
<dbReference type="GO" id="GO:0005789">
    <property type="term" value="C:endoplasmic reticulum membrane"/>
    <property type="evidence" value="ECO:0007669"/>
    <property type="project" value="UniProtKB-SubCell"/>
</dbReference>
<dbReference type="GO" id="GO:0005524">
    <property type="term" value="F:ATP binding"/>
    <property type="evidence" value="ECO:0007669"/>
    <property type="project" value="UniProtKB-KW"/>
</dbReference>
<dbReference type="GO" id="GO:0051740">
    <property type="term" value="F:ethylene binding"/>
    <property type="evidence" value="ECO:0007669"/>
    <property type="project" value="InterPro"/>
</dbReference>
<dbReference type="GO" id="GO:0038199">
    <property type="term" value="F:ethylene receptor activity"/>
    <property type="evidence" value="ECO:0007669"/>
    <property type="project" value="InterPro"/>
</dbReference>
<dbReference type="GO" id="GO:0046872">
    <property type="term" value="F:metal ion binding"/>
    <property type="evidence" value="ECO:0007669"/>
    <property type="project" value="UniProtKB-KW"/>
</dbReference>
<dbReference type="GO" id="GO:0000155">
    <property type="term" value="F:phosphorelay sensor kinase activity"/>
    <property type="evidence" value="ECO:0007669"/>
    <property type="project" value="InterPro"/>
</dbReference>
<dbReference type="GO" id="GO:0010105">
    <property type="term" value="P:negative regulation of ethylene-activated signaling pathway"/>
    <property type="evidence" value="ECO:0007669"/>
    <property type="project" value="UniProtKB-ARBA"/>
</dbReference>
<dbReference type="CDD" id="cd16922">
    <property type="entry name" value="HATPase_EvgS-ArcB-TorS-like"/>
    <property type="match status" value="1"/>
</dbReference>
<dbReference type="CDD" id="cd00082">
    <property type="entry name" value="HisKA"/>
    <property type="match status" value="1"/>
</dbReference>
<dbReference type="FunFam" id="3.40.50.2300:FF:000192">
    <property type="entry name" value="Ethylene receptor"/>
    <property type="match status" value="1"/>
</dbReference>
<dbReference type="FunFam" id="1.10.287.130:FF:000004">
    <property type="entry name" value="Ethylene receptor 1"/>
    <property type="match status" value="1"/>
</dbReference>
<dbReference type="FunFam" id="3.30.565.10:FF:000030">
    <property type="entry name" value="Ethylene receptor 1"/>
    <property type="match status" value="1"/>
</dbReference>
<dbReference type="FunFam" id="3.30.450.40:FF:000026">
    <property type="entry name" value="Ethylene response sensor"/>
    <property type="match status" value="1"/>
</dbReference>
<dbReference type="Gene3D" id="1.10.287.130">
    <property type="match status" value="1"/>
</dbReference>
<dbReference type="Gene3D" id="3.30.450.40">
    <property type="match status" value="1"/>
</dbReference>
<dbReference type="Gene3D" id="3.40.50.2300">
    <property type="match status" value="1"/>
</dbReference>
<dbReference type="Gene3D" id="3.30.565.10">
    <property type="entry name" value="Histidine kinase-like ATPase, C-terminal domain"/>
    <property type="match status" value="1"/>
</dbReference>
<dbReference type="InterPro" id="IPR011006">
    <property type="entry name" value="CheY-like_superfamily"/>
</dbReference>
<dbReference type="InterPro" id="IPR014525">
    <property type="entry name" value="ETR"/>
</dbReference>
<dbReference type="InterPro" id="IPR003018">
    <property type="entry name" value="GAF"/>
</dbReference>
<dbReference type="InterPro" id="IPR029016">
    <property type="entry name" value="GAF-like_dom_sf"/>
</dbReference>
<dbReference type="InterPro" id="IPR036890">
    <property type="entry name" value="HATPase_C_sf"/>
</dbReference>
<dbReference type="InterPro" id="IPR005467">
    <property type="entry name" value="His_kinase_dom"/>
</dbReference>
<dbReference type="InterPro" id="IPR003661">
    <property type="entry name" value="HisK_dim/P_dom"/>
</dbReference>
<dbReference type="InterPro" id="IPR036097">
    <property type="entry name" value="HisK_dim/P_sf"/>
</dbReference>
<dbReference type="InterPro" id="IPR004358">
    <property type="entry name" value="Sig_transdc_His_kin-like_C"/>
</dbReference>
<dbReference type="InterPro" id="IPR001789">
    <property type="entry name" value="Sig_transdc_resp-reg_receiver"/>
</dbReference>
<dbReference type="PANTHER" id="PTHR24423:SF615">
    <property type="entry name" value="ETHYLENE RECEPTOR 1"/>
    <property type="match status" value="1"/>
</dbReference>
<dbReference type="PANTHER" id="PTHR24423">
    <property type="entry name" value="TWO-COMPONENT SENSOR HISTIDINE KINASE"/>
    <property type="match status" value="1"/>
</dbReference>
<dbReference type="Pfam" id="PF25487">
    <property type="entry name" value="ETR1_N"/>
    <property type="match status" value="1"/>
</dbReference>
<dbReference type="Pfam" id="PF01590">
    <property type="entry name" value="GAF"/>
    <property type="match status" value="1"/>
</dbReference>
<dbReference type="Pfam" id="PF02518">
    <property type="entry name" value="HATPase_c"/>
    <property type="match status" value="1"/>
</dbReference>
<dbReference type="Pfam" id="PF00512">
    <property type="entry name" value="HisKA"/>
    <property type="match status" value="1"/>
</dbReference>
<dbReference type="Pfam" id="PF00072">
    <property type="entry name" value="Response_reg"/>
    <property type="match status" value="1"/>
</dbReference>
<dbReference type="PIRSF" id="PIRSF026389">
    <property type="entry name" value="Ethyln_sen_HK"/>
    <property type="match status" value="1"/>
</dbReference>
<dbReference type="PRINTS" id="PR00344">
    <property type="entry name" value="BCTRLSENSOR"/>
</dbReference>
<dbReference type="SMART" id="SM00065">
    <property type="entry name" value="GAF"/>
    <property type="match status" value="1"/>
</dbReference>
<dbReference type="SMART" id="SM00387">
    <property type="entry name" value="HATPase_c"/>
    <property type="match status" value="1"/>
</dbReference>
<dbReference type="SMART" id="SM00388">
    <property type="entry name" value="HisKA"/>
    <property type="match status" value="1"/>
</dbReference>
<dbReference type="SMART" id="SM00448">
    <property type="entry name" value="REC"/>
    <property type="match status" value="1"/>
</dbReference>
<dbReference type="SUPFAM" id="SSF55874">
    <property type="entry name" value="ATPase domain of HSP90 chaperone/DNA topoisomerase II/histidine kinase"/>
    <property type="match status" value="1"/>
</dbReference>
<dbReference type="SUPFAM" id="SSF52172">
    <property type="entry name" value="CheY-like"/>
    <property type="match status" value="1"/>
</dbReference>
<dbReference type="SUPFAM" id="SSF55781">
    <property type="entry name" value="GAF domain-like"/>
    <property type="match status" value="1"/>
</dbReference>
<dbReference type="SUPFAM" id="SSF47384">
    <property type="entry name" value="Homodimeric domain of signal transducing histidine kinase"/>
    <property type="match status" value="1"/>
</dbReference>
<dbReference type="PROSITE" id="PS50109">
    <property type="entry name" value="HIS_KIN"/>
    <property type="match status" value="1"/>
</dbReference>
<dbReference type="PROSITE" id="PS50110">
    <property type="entry name" value="RESPONSE_REGULATORY"/>
    <property type="match status" value="1"/>
</dbReference>
<sequence>MLACNCIEPQWPADELLMKYQYISDFFIALAYFSIPLELIYFVKKSAVFPYRWVLVQFGAFIVLCGATHLINLWTFSIHSRTVAMVMTTAKVLTAVVSCATALMLVHIIPDLLSVKTRELFLKNKAAELDREMGLIRTQEETGRHVRMLTHEIRSTLDRHTILKTTLVELGRTLALEECALWMPTRTGLELQLSYTLRQQNPVGYTVPIHLPVINQVFSSNRAVKISANSPVAKLRQLAGRHIPGEVVAVRVPLLHLSNFQINDWPELSTKRYALMVLMLPSDSARQWHVHELELVEVVADQVAVALSHAAILEESMRARDLLMEQNIALDLARREAETAIRARNDFLAVMNHEMRTPMHAIIALSSLLQETELTAEQRLMVETILRSSNLLATLINDVLDLSRLEDGSLQLEIATFNLHSVFREVHNMIKPVASIKRLSVTLNIAADLPMYAIGDEKRLMQTILNVVGNAVKFSKEGSISITAFVAKSESLRDFRAPDFFPVQSDNHFYLRVQVKDSGSGINPQDIPKLFTKFAQTQALATRNSGGSGLGLAICKRFVNLMEGHIWIESEGLGKGCTATFIVKLGFPERSNESKLPFAPKLQANHVQTNFPGLKVLVMDDNGVSRSVTKGLLAHLGCDVTAVSLIDELLHVISQEHKVVFMDVSMPGIDGYELAVRIHEKFTKRHERPVLVALTGSIDKITKENCMRVGVDGVILKPVSVDKMRSVLSELLEHRVLFEAM</sequence>
<protein>
    <recommendedName>
        <fullName>Ethylene receptor</fullName>
        <ecNumber>2.7.13.3</ecNumber>
    </recommendedName>
</protein>
<comment type="function">
    <text evidence="1">May act early in the ethylene signal transduction pathway, possibly as an ethylene receptor, or as a regulator of the pathway.</text>
</comment>
<comment type="catalytic activity">
    <reaction>
        <text>ATP + protein L-histidine = ADP + protein N-phospho-L-histidine.</text>
        <dbReference type="EC" id="2.7.13.3"/>
    </reaction>
</comment>
<comment type="cofactor">
    <cofactor evidence="1">
        <name>Cu cation</name>
        <dbReference type="ChEBI" id="CHEBI:23378"/>
    </cofactor>
    <text evidence="1">Binds 1 copper ion per dimer.</text>
</comment>
<comment type="subunit">
    <text evidence="1">Homodimer; disulfide-linked.</text>
</comment>
<comment type="subcellular location">
    <subcellularLocation>
        <location evidence="1">Endoplasmic reticulum membrane</location>
        <topology evidence="1">Multi-pass membrane protein</topology>
    </subcellularLocation>
</comment>
<comment type="PTM">
    <text evidence="1">Activation probably requires a transfer of a phosphate group between a His in the transmitter domain and an Asp of the receiver domain.</text>
</comment>
<comment type="similarity">
    <text evidence="5">Belongs to the ethylene receptor family.</text>
</comment>
<name>ETR1_MALDO</name>
<proteinExistence type="evidence at transcript level"/>